<protein>
    <recommendedName>
        <fullName evidence="1">tRNA(Met) cytidine acetate ligase</fullName>
        <ecNumber evidence="1">6.3.4.-</ecNumber>
    </recommendedName>
</protein>
<keyword id="KW-0067">ATP-binding</keyword>
<keyword id="KW-0963">Cytoplasm</keyword>
<keyword id="KW-0436">Ligase</keyword>
<keyword id="KW-0547">Nucleotide-binding</keyword>
<keyword id="KW-1185">Reference proteome</keyword>
<keyword id="KW-0694">RNA-binding</keyword>
<keyword id="KW-0819">tRNA processing</keyword>
<keyword id="KW-0820">tRNA-binding</keyword>
<organism>
    <name type="scientific">Halothermothrix orenii (strain H 168 / OCM 544 / DSM 9562)</name>
    <dbReference type="NCBI Taxonomy" id="373903"/>
    <lineage>
        <taxon>Bacteria</taxon>
        <taxon>Bacillati</taxon>
        <taxon>Bacillota</taxon>
        <taxon>Clostridia</taxon>
        <taxon>Halanaerobiales</taxon>
        <taxon>Halothermotrichaceae</taxon>
        <taxon>Halothermothrix</taxon>
    </lineage>
</organism>
<proteinExistence type="inferred from homology"/>
<feature type="chain" id="PRO_1000215427" description="tRNA(Met) cytidine acetate ligase">
    <location>
        <begin position="1"/>
        <end position="422"/>
    </location>
</feature>
<feature type="binding site" evidence="1">
    <location>
        <begin position="7"/>
        <end position="20"/>
    </location>
    <ligand>
        <name>ATP</name>
        <dbReference type="ChEBI" id="CHEBI:30616"/>
    </ligand>
</feature>
<feature type="binding site" evidence="1">
    <location>
        <position position="102"/>
    </location>
    <ligand>
        <name>ATP</name>
        <dbReference type="ChEBI" id="CHEBI:30616"/>
    </ligand>
</feature>
<feature type="binding site" evidence="1">
    <location>
        <position position="172"/>
    </location>
    <ligand>
        <name>ATP</name>
        <dbReference type="ChEBI" id="CHEBI:30616"/>
    </ligand>
</feature>
<feature type="binding site" evidence="1">
    <location>
        <position position="197"/>
    </location>
    <ligand>
        <name>ATP</name>
        <dbReference type="ChEBI" id="CHEBI:30616"/>
    </ligand>
</feature>
<gene>
    <name evidence="1" type="primary">tmcAL</name>
    <name type="ordered locus">Hore_10190</name>
</gene>
<name>TMCAL_HALOH</name>
<accession>B8CWV6</accession>
<reference key="1">
    <citation type="journal article" date="2009" name="PLoS ONE">
        <title>Genome analysis of the anaerobic thermohalophilic bacterium Halothermothrix orenii.</title>
        <authorList>
            <person name="Mavromatis K."/>
            <person name="Ivanova N."/>
            <person name="Anderson I."/>
            <person name="Lykidis A."/>
            <person name="Hooper S.D."/>
            <person name="Sun H."/>
            <person name="Kunin V."/>
            <person name="Lapidus A."/>
            <person name="Hugenholtz P."/>
            <person name="Patel B."/>
            <person name="Kyrpides N.C."/>
        </authorList>
    </citation>
    <scope>NUCLEOTIDE SEQUENCE [LARGE SCALE GENOMIC DNA]</scope>
    <source>
        <strain>H 168 / OCM 544 / DSM 9562</strain>
    </source>
</reference>
<evidence type="ECO:0000255" key="1">
    <source>
        <dbReference type="HAMAP-Rule" id="MF_01539"/>
    </source>
</evidence>
<comment type="function">
    <text evidence="1">Catalyzes the formation of N(4)-acetylcytidine (ac(4)C) at the wobble position of elongator tRNA(Met), using acetate and ATP as substrates. First activates an acetate ion to form acetyladenylate (Ac-AMP) and then transfers the acetyl group to tRNA to form ac(4)C34.</text>
</comment>
<comment type="catalytic activity">
    <reaction evidence="1">
        <text>cytidine(34) in elongator tRNA(Met) + acetate + ATP = N(4)-acetylcytidine(34) in elongator tRNA(Met) + AMP + diphosphate</text>
        <dbReference type="Rhea" id="RHEA:58144"/>
        <dbReference type="Rhea" id="RHEA-COMP:10693"/>
        <dbReference type="Rhea" id="RHEA-COMP:10694"/>
        <dbReference type="ChEBI" id="CHEBI:30089"/>
        <dbReference type="ChEBI" id="CHEBI:30616"/>
        <dbReference type="ChEBI" id="CHEBI:33019"/>
        <dbReference type="ChEBI" id="CHEBI:74900"/>
        <dbReference type="ChEBI" id="CHEBI:82748"/>
        <dbReference type="ChEBI" id="CHEBI:456215"/>
    </reaction>
</comment>
<comment type="subcellular location">
    <subcellularLocation>
        <location evidence="1">Cytoplasm</location>
    </subcellularLocation>
</comment>
<comment type="similarity">
    <text evidence="1">Belongs to the TmcAL family.</text>
</comment>
<dbReference type="EC" id="6.3.4.-" evidence="1"/>
<dbReference type="EMBL" id="CP001098">
    <property type="protein sequence ID" value="ACL69775.1"/>
    <property type="molecule type" value="Genomic_DNA"/>
</dbReference>
<dbReference type="RefSeq" id="WP_012635960.1">
    <property type="nucleotide sequence ID" value="NC_011899.1"/>
</dbReference>
<dbReference type="SMR" id="B8CWV6"/>
<dbReference type="STRING" id="373903.Hore_10190"/>
<dbReference type="KEGG" id="hor:Hore_10190"/>
<dbReference type="eggNOG" id="COG1323">
    <property type="taxonomic scope" value="Bacteria"/>
</dbReference>
<dbReference type="HOGENOM" id="CLU_038915_0_2_9"/>
<dbReference type="OrthoDB" id="9769796at2"/>
<dbReference type="Proteomes" id="UP000000719">
    <property type="component" value="Chromosome"/>
</dbReference>
<dbReference type="GO" id="GO:0005737">
    <property type="term" value="C:cytoplasm"/>
    <property type="evidence" value="ECO:0007669"/>
    <property type="project" value="UniProtKB-SubCell"/>
</dbReference>
<dbReference type="GO" id="GO:0005524">
    <property type="term" value="F:ATP binding"/>
    <property type="evidence" value="ECO:0007669"/>
    <property type="project" value="UniProtKB-KW"/>
</dbReference>
<dbReference type="GO" id="GO:0016879">
    <property type="term" value="F:ligase activity, forming carbon-nitrogen bonds"/>
    <property type="evidence" value="ECO:0007669"/>
    <property type="project" value="UniProtKB-UniRule"/>
</dbReference>
<dbReference type="GO" id="GO:0000049">
    <property type="term" value="F:tRNA binding"/>
    <property type="evidence" value="ECO:0007669"/>
    <property type="project" value="UniProtKB-KW"/>
</dbReference>
<dbReference type="GO" id="GO:0006400">
    <property type="term" value="P:tRNA modification"/>
    <property type="evidence" value="ECO:0007669"/>
    <property type="project" value="UniProtKB-UniRule"/>
</dbReference>
<dbReference type="Gene3D" id="3.40.50.620">
    <property type="entry name" value="HUPs"/>
    <property type="match status" value="1"/>
</dbReference>
<dbReference type="HAMAP" id="MF_01539">
    <property type="entry name" value="TmcAL"/>
    <property type="match status" value="1"/>
</dbReference>
<dbReference type="InterPro" id="IPR014729">
    <property type="entry name" value="Rossmann-like_a/b/a_fold"/>
</dbReference>
<dbReference type="InterPro" id="IPR008513">
    <property type="entry name" value="tRNA(Met)_cyd_acetate_ligase"/>
</dbReference>
<dbReference type="NCBIfam" id="NF010191">
    <property type="entry name" value="PRK13670.1"/>
    <property type="match status" value="1"/>
</dbReference>
<dbReference type="PANTHER" id="PTHR37825">
    <property type="entry name" value="TRNA(MET) CYTIDINE ACETATE LIGASE"/>
    <property type="match status" value="1"/>
</dbReference>
<dbReference type="PANTHER" id="PTHR37825:SF1">
    <property type="entry name" value="TRNA(MET) CYTIDINE ACETATE LIGASE"/>
    <property type="match status" value="1"/>
</dbReference>
<dbReference type="Pfam" id="PF05636">
    <property type="entry name" value="HIGH_NTase1"/>
    <property type="match status" value="1"/>
</dbReference>
<dbReference type="SUPFAM" id="SSF52374">
    <property type="entry name" value="Nucleotidylyl transferase"/>
    <property type="match status" value="1"/>
</dbReference>
<sequence>MPVLGIITEYNPFHNGHLYHLNQARTITDSNAVICIMNGNFVQRGEPALIDKWARTRMALKNGVDLIIELPLIYGIRSAEYFAYGAVTLLEETKTVDYLVFGSESGNTDILKVVARILYEEPHNFKQYLKKYISQGLSFPRAREKALLKYVQQTDNIPYSVNEIADVIKQPNNILGIEYIKALFRINSTIKPVAIRRKGKGYHSHSLETKITSATAIRKGIYEQGLNSVKQAITPVTYKILKEEFENGKGPVQKQLLQHAILAELRKLTPEKIRQYEGVKNGLEYRFLEAAHNSGTLTGLIENIKNKNLTWTRIQRTLLHILFNIREKDFRILDKKGPRYFRVLGFNKKGEKLLSKIKQNSRLPLITHLKPHLKQVNRNSLNLLEKSLSYDVLSSDMYSLLYPDPSKRRGRKDFLIPVIKNI</sequence>